<gene>
    <name type="ordered locus">At5g39020</name>
    <name type="ORF">MXF12.30</name>
</gene>
<sequence length="813" mass="90448">MNCNVLFLLSVLVSVTAGVTAAYHPTDVFLFNCGDTSNNVDNSGRNWTVESRQILSSNLVNASFTSEASYQKAGVSRIPYMKARIFRSEFTYSFPVTPGSIFLRLYFYPTQYKSGFDAVNSFFSVKVNGFTLLRNFNADSTVQASIPLSNSLIKEFIIPVHQTLNLTFTPSKNLLAFVNGIEIVSMPDRFYSKGGFDNVLRNVSSDVDFQIDNSTAFESVHRLNVGGQIVNEVDDSGMFRRWLSDDSFGNSGSIVNVPGVKINYTEKTPAYVAPYDVYATSRLMGNSSNLMFNLTGMFLTVDAGYNYLVRLHFCETLPQVTKAGQRVFSIFVEDKMAKKETDVIRLSGGPRIPMYLDFSVYVGFESGMIQPELRLDLVPLKDTNQTYYDAILSGVEILKLNDSDGNLARPNPELLVSTDSTPDDSNVTPPIKGKPHVLVIILIVVGSVIGLATFIVIIMLLIRQMKRKKNKKENSVIMFKLLLKQYIYAELKKITKSFSHTVGKGGFGTVYRGNLSNGRTVAVKVLKDLKGNGDDFINEVTSMSQTSHVNIVSLLGFCYEGSKRAIISEFLEHGSLDQFISRNKSLTPNVTTLYGIALGIARGLEYLHYGCKTRIVHFDIKPQNILLDDNFCPKVADFGLAKLCEKRESILSLIDTRGTIGYIAPEVVSRMYGGISHKSDVYSYGMLVLDMIGARNKVETTTCNGSTAYFPDWIYKDLENGDQTWIIGDEINEEDNKIVKKMILVSLWCIRPCPSDRPPMNKVVEMIEGSLDALELPPKPSRHISTELVLESSSLSDGQEAEKQTQTLDSTII</sequence>
<keyword id="KW-0067">ATP-binding</keyword>
<keyword id="KW-0325">Glycoprotein</keyword>
<keyword id="KW-0418">Kinase</keyword>
<keyword id="KW-0472">Membrane</keyword>
<keyword id="KW-0547">Nucleotide-binding</keyword>
<keyword id="KW-1185">Reference proteome</keyword>
<keyword id="KW-0723">Serine/threonine-protein kinase</keyword>
<keyword id="KW-0732">Signal</keyword>
<keyword id="KW-0808">Transferase</keyword>
<keyword id="KW-0812">Transmembrane</keyword>
<keyword id="KW-1133">Transmembrane helix</keyword>
<dbReference type="EC" id="2.7.11.-"/>
<dbReference type="EMBL" id="AB016892">
    <property type="protein sequence ID" value="BAB10826.1"/>
    <property type="molecule type" value="Genomic_DNA"/>
</dbReference>
<dbReference type="EMBL" id="CP002688">
    <property type="protein sequence ID" value="AED94387.1"/>
    <property type="molecule type" value="Genomic_DNA"/>
</dbReference>
<dbReference type="RefSeq" id="NP_198718.1">
    <property type="nucleotide sequence ID" value="NM_123264.2"/>
</dbReference>
<dbReference type="SMR" id="Q9FID6"/>
<dbReference type="FunCoup" id="Q9FID6">
    <property type="interactions" value="45"/>
</dbReference>
<dbReference type="STRING" id="3702.Q9FID6"/>
<dbReference type="GlyGen" id="Q9FID6">
    <property type="glycosylation" value="12 sites"/>
</dbReference>
<dbReference type="iPTMnet" id="Q9FID6"/>
<dbReference type="PaxDb" id="3702-AT5G39020.1"/>
<dbReference type="ProteomicsDB" id="243018"/>
<dbReference type="EnsemblPlants" id="AT5G39020.1">
    <property type="protein sequence ID" value="AT5G39020.1"/>
    <property type="gene ID" value="AT5G39020"/>
</dbReference>
<dbReference type="GeneID" id="833894"/>
<dbReference type="Gramene" id="AT5G39020.1">
    <property type="protein sequence ID" value="AT5G39020.1"/>
    <property type="gene ID" value="AT5G39020"/>
</dbReference>
<dbReference type="KEGG" id="ath:AT5G39020"/>
<dbReference type="Araport" id="AT5G39020"/>
<dbReference type="TAIR" id="AT5G39020">
    <property type="gene designation" value="MDS3"/>
</dbReference>
<dbReference type="eggNOG" id="KOG1187">
    <property type="taxonomic scope" value="Eukaryota"/>
</dbReference>
<dbReference type="HOGENOM" id="CLU_000288_42_5_1"/>
<dbReference type="InParanoid" id="Q9FID6"/>
<dbReference type="OMA" id="WILGDEV"/>
<dbReference type="PhylomeDB" id="Q9FID6"/>
<dbReference type="PRO" id="PR:Q9FID6"/>
<dbReference type="Proteomes" id="UP000006548">
    <property type="component" value="Chromosome 5"/>
</dbReference>
<dbReference type="ExpressionAtlas" id="Q9FID6">
    <property type="expression patterns" value="baseline and differential"/>
</dbReference>
<dbReference type="GO" id="GO:0016020">
    <property type="term" value="C:membrane"/>
    <property type="evidence" value="ECO:0007669"/>
    <property type="project" value="UniProtKB-SubCell"/>
</dbReference>
<dbReference type="GO" id="GO:0005524">
    <property type="term" value="F:ATP binding"/>
    <property type="evidence" value="ECO:0007669"/>
    <property type="project" value="UniProtKB-KW"/>
</dbReference>
<dbReference type="GO" id="GO:0004674">
    <property type="term" value="F:protein serine/threonine kinase activity"/>
    <property type="evidence" value="ECO:0007669"/>
    <property type="project" value="UniProtKB-KW"/>
</dbReference>
<dbReference type="GO" id="GO:0010038">
    <property type="term" value="P:response to metal ion"/>
    <property type="evidence" value="ECO:0000316"/>
    <property type="project" value="TAIR"/>
</dbReference>
<dbReference type="FunFam" id="2.60.120.430:FF:000003">
    <property type="entry name" value="FERONIA receptor-like kinase"/>
    <property type="match status" value="1"/>
</dbReference>
<dbReference type="FunFam" id="2.60.120.430:FF:000007">
    <property type="entry name" value="FERONIA receptor-like kinase"/>
    <property type="match status" value="1"/>
</dbReference>
<dbReference type="FunFam" id="1.10.510.10:FF:000590">
    <property type="entry name" value="PR5-like receptor kinase"/>
    <property type="match status" value="1"/>
</dbReference>
<dbReference type="FunFam" id="3.30.200.20:FF:000178">
    <property type="entry name" value="serine/threonine-protein kinase PBS1-like"/>
    <property type="match status" value="1"/>
</dbReference>
<dbReference type="Gene3D" id="2.60.120.430">
    <property type="entry name" value="Galactose-binding lectin"/>
    <property type="match status" value="2"/>
</dbReference>
<dbReference type="Gene3D" id="3.30.200.20">
    <property type="entry name" value="Phosphorylase Kinase, domain 1"/>
    <property type="match status" value="1"/>
</dbReference>
<dbReference type="Gene3D" id="1.10.510.10">
    <property type="entry name" value="Transferase(Phosphotransferase) domain 1"/>
    <property type="match status" value="1"/>
</dbReference>
<dbReference type="InterPro" id="IPR011009">
    <property type="entry name" value="Kinase-like_dom_sf"/>
</dbReference>
<dbReference type="InterPro" id="IPR045874">
    <property type="entry name" value="LRK10/LRL21-25-like"/>
</dbReference>
<dbReference type="InterPro" id="IPR024788">
    <property type="entry name" value="Malectin-like_Carb-bd_dom"/>
</dbReference>
<dbReference type="InterPro" id="IPR000719">
    <property type="entry name" value="Prot_kinase_dom"/>
</dbReference>
<dbReference type="InterPro" id="IPR017441">
    <property type="entry name" value="Protein_kinase_ATP_BS"/>
</dbReference>
<dbReference type="InterPro" id="IPR008271">
    <property type="entry name" value="Ser/Thr_kinase_AS"/>
</dbReference>
<dbReference type="PANTHER" id="PTHR27009">
    <property type="entry name" value="RUST RESISTANCE KINASE LR10-RELATED"/>
    <property type="match status" value="1"/>
</dbReference>
<dbReference type="Pfam" id="PF12819">
    <property type="entry name" value="Malectin_like"/>
    <property type="match status" value="1"/>
</dbReference>
<dbReference type="Pfam" id="PF00069">
    <property type="entry name" value="Pkinase"/>
    <property type="match status" value="1"/>
</dbReference>
<dbReference type="SMART" id="SM00220">
    <property type="entry name" value="S_TKc"/>
    <property type="match status" value="1"/>
</dbReference>
<dbReference type="SUPFAM" id="SSF56112">
    <property type="entry name" value="Protein kinase-like (PK-like)"/>
    <property type="match status" value="1"/>
</dbReference>
<dbReference type="PROSITE" id="PS00107">
    <property type="entry name" value="PROTEIN_KINASE_ATP"/>
    <property type="match status" value="1"/>
</dbReference>
<dbReference type="PROSITE" id="PS50011">
    <property type="entry name" value="PROTEIN_KINASE_DOM"/>
    <property type="match status" value="1"/>
</dbReference>
<dbReference type="PROSITE" id="PS00108">
    <property type="entry name" value="PROTEIN_KINASE_ST"/>
    <property type="match status" value="1"/>
</dbReference>
<reference key="1">
    <citation type="journal article" date="1998" name="DNA Res.">
        <title>Structural analysis of Arabidopsis thaliana chromosome 5. VIII. Sequence features of the regions of 1,081,958 bp covered by seventeen physically assigned P1 and TAC clones.</title>
        <authorList>
            <person name="Asamizu E."/>
            <person name="Sato S."/>
            <person name="Kaneko T."/>
            <person name="Nakamura Y."/>
            <person name="Kotani H."/>
            <person name="Miyajima N."/>
            <person name="Tabata S."/>
        </authorList>
    </citation>
    <scope>NUCLEOTIDE SEQUENCE [LARGE SCALE GENOMIC DNA]</scope>
    <source>
        <strain>cv. Columbia</strain>
    </source>
</reference>
<reference key="2">
    <citation type="journal article" date="2017" name="Plant J.">
        <title>Araport11: a complete reannotation of the Arabidopsis thaliana reference genome.</title>
        <authorList>
            <person name="Cheng C.Y."/>
            <person name="Krishnakumar V."/>
            <person name="Chan A.P."/>
            <person name="Thibaud-Nissen F."/>
            <person name="Schobel S."/>
            <person name="Town C.D."/>
        </authorList>
    </citation>
    <scope>GENOME REANNOTATION</scope>
    <source>
        <strain>cv. Columbia</strain>
    </source>
</reference>
<reference key="3">
    <citation type="journal article" date="2009" name="Mol. Plant">
        <title>Diverse transcriptional programs associated with environmental stress and hormones in the Arabidopsis receptor-like kinase gene family.</title>
        <authorList>
            <person name="Chae L."/>
            <person name="Sudat S."/>
            <person name="Dudoit S."/>
            <person name="Zhu T."/>
            <person name="Luan S."/>
        </authorList>
    </citation>
    <scope>GENE FAMILY</scope>
</reference>
<feature type="signal peptide" evidence="1">
    <location>
        <begin position="1"/>
        <end position="21"/>
    </location>
</feature>
<feature type="chain" id="PRO_0000386561" description="Probable receptor-like protein kinase At5g39020">
    <location>
        <begin position="22"/>
        <end position="813"/>
    </location>
</feature>
<feature type="topological domain" description="Extracellular" evidence="1">
    <location>
        <begin position="22"/>
        <end position="437"/>
    </location>
</feature>
<feature type="transmembrane region" description="Helical" evidence="1">
    <location>
        <begin position="438"/>
        <end position="458"/>
    </location>
</feature>
<feature type="topological domain" description="Cytoplasmic" evidence="1">
    <location>
        <begin position="459"/>
        <end position="813"/>
    </location>
</feature>
<feature type="domain" description="Protein kinase" evidence="2">
    <location>
        <begin position="496"/>
        <end position="771"/>
    </location>
</feature>
<feature type="region of interest" description="Disordered" evidence="4">
    <location>
        <begin position="791"/>
        <end position="813"/>
    </location>
</feature>
<feature type="compositionally biased region" description="Polar residues" evidence="4">
    <location>
        <begin position="804"/>
        <end position="813"/>
    </location>
</feature>
<feature type="active site" description="Proton acceptor" evidence="2 3">
    <location>
        <position position="619"/>
    </location>
</feature>
<feature type="binding site" evidence="2">
    <location>
        <begin position="502"/>
        <end position="510"/>
    </location>
    <ligand>
        <name>ATP</name>
        <dbReference type="ChEBI" id="CHEBI:30616"/>
    </ligand>
</feature>
<feature type="binding site" evidence="2">
    <location>
        <position position="524"/>
    </location>
    <ligand>
        <name>ATP</name>
        <dbReference type="ChEBI" id="CHEBI:30616"/>
    </ligand>
</feature>
<feature type="glycosylation site" description="N-linked (GlcNAc...) asparagine" evidence="1">
    <location>
        <position position="46"/>
    </location>
</feature>
<feature type="glycosylation site" description="N-linked (GlcNAc...) asparagine" evidence="1">
    <location>
        <position position="61"/>
    </location>
</feature>
<feature type="glycosylation site" description="N-linked (GlcNAc...) asparagine" evidence="1">
    <location>
        <position position="165"/>
    </location>
</feature>
<feature type="glycosylation site" description="N-linked (GlcNAc...) asparagine" evidence="1">
    <location>
        <position position="202"/>
    </location>
</feature>
<feature type="glycosylation site" description="N-linked (GlcNAc...) asparagine" evidence="1">
    <location>
        <position position="213"/>
    </location>
</feature>
<feature type="glycosylation site" description="N-linked (GlcNAc...) asparagine" evidence="1">
    <location>
        <position position="263"/>
    </location>
</feature>
<feature type="glycosylation site" description="N-linked (GlcNAc...) asparagine" evidence="1">
    <location>
        <position position="286"/>
    </location>
</feature>
<feature type="glycosylation site" description="N-linked (GlcNAc...) asparagine" evidence="1">
    <location>
        <position position="293"/>
    </location>
</feature>
<feature type="glycosylation site" description="N-linked (GlcNAc...) asparagine" evidence="1">
    <location>
        <position position="384"/>
    </location>
</feature>
<feature type="glycosylation site" description="N-linked (GlcNAc...) asparagine" evidence="1">
    <location>
        <position position="401"/>
    </location>
</feature>
<proteinExistence type="evidence at transcript level"/>
<organism>
    <name type="scientific">Arabidopsis thaliana</name>
    <name type="common">Mouse-ear cress</name>
    <dbReference type="NCBI Taxonomy" id="3702"/>
    <lineage>
        <taxon>Eukaryota</taxon>
        <taxon>Viridiplantae</taxon>
        <taxon>Streptophyta</taxon>
        <taxon>Embryophyta</taxon>
        <taxon>Tracheophyta</taxon>
        <taxon>Spermatophyta</taxon>
        <taxon>Magnoliopsida</taxon>
        <taxon>eudicotyledons</taxon>
        <taxon>Gunneridae</taxon>
        <taxon>Pentapetalae</taxon>
        <taxon>rosids</taxon>
        <taxon>malvids</taxon>
        <taxon>Brassicales</taxon>
        <taxon>Brassicaceae</taxon>
        <taxon>Camelineae</taxon>
        <taxon>Arabidopsis</taxon>
    </lineage>
</organism>
<evidence type="ECO:0000255" key="1"/>
<evidence type="ECO:0000255" key="2">
    <source>
        <dbReference type="PROSITE-ProRule" id="PRU00159"/>
    </source>
</evidence>
<evidence type="ECO:0000255" key="3">
    <source>
        <dbReference type="PROSITE-ProRule" id="PRU10027"/>
    </source>
</evidence>
<evidence type="ECO:0000256" key="4">
    <source>
        <dbReference type="SAM" id="MobiDB-lite"/>
    </source>
</evidence>
<evidence type="ECO:0000305" key="5"/>
<protein>
    <recommendedName>
        <fullName>Probable receptor-like protein kinase At5g39020</fullName>
        <ecNumber>2.7.11.-</ecNumber>
    </recommendedName>
</protein>
<comment type="subcellular location">
    <subcellularLocation>
        <location evidence="5">Membrane</location>
        <topology evidence="5">Single-pass type I membrane protein</topology>
    </subcellularLocation>
</comment>
<comment type="similarity">
    <text evidence="2">Belongs to the protein kinase superfamily. Ser/Thr protein kinase family.</text>
</comment>
<name>Y5392_ARATH</name>
<accession>Q9FID6</accession>